<gene>
    <name evidence="6" type="primary">dmxR18</name>
</gene>
<protein>
    <recommendedName>
        <fullName evidence="6">Short chain dehydrogenase/reductase dmxR18</fullName>
        <shortName evidence="6">SDR dmsR18</shortName>
        <ecNumber evidence="3">1.3.1.-</ecNumber>
    </recommendedName>
    <alternativeName>
        <fullName evidence="6">Dimeric xanthone biosynthesis cluster protein R18</fullName>
    </alternativeName>
</protein>
<keyword id="KW-0521">NADP</keyword>
<keyword id="KW-0560">Oxidoreductase</keyword>
<feature type="chain" id="PRO_0000453445" description="Short chain dehydrogenase/reductase dmxR18">
    <location>
        <begin position="1"/>
        <end position="264"/>
    </location>
</feature>
<feature type="active site" description="Proton donor" evidence="2">
    <location>
        <position position="146"/>
    </location>
</feature>
<feature type="active site" description="Proton donor" evidence="2">
    <location>
        <position position="147"/>
    </location>
</feature>
<feature type="active site" description="Proton acceptor" evidence="4">
    <location>
        <position position="161"/>
    </location>
</feature>
<feature type="active site" description="Lowers pKa of active site Tyr" evidence="2">
    <location>
        <position position="165"/>
    </location>
</feature>
<feature type="binding site" evidence="1">
    <location>
        <position position="24"/>
    </location>
    <ligand>
        <name>NADP(+)</name>
        <dbReference type="ChEBI" id="CHEBI:58349"/>
    </ligand>
</feature>
<feature type="binding site" evidence="1">
    <location>
        <position position="70"/>
    </location>
    <ligand>
        <name>NADP(+)</name>
        <dbReference type="ChEBI" id="CHEBI:58349"/>
    </ligand>
</feature>
<feature type="binding site" evidence="2">
    <location>
        <position position="97"/>
    </location>
    <ligand>
        <name>NADP(+)</name>
        <dbReference type="ChEBI" id="CHEBI:58349"/>
    </ligand>
</feature>
<feature type="binding site" evidence="1">
    <location>
        <position position="130"/>
    </location>
    <ligand>
        <name>NADP(+)</name>
        <dbReference type="ChEBI" id="CHEBI:58349"/>
    </ligand>
</feature>
<feature type="binding site" evidence="2">
    <location>
        <position position="161"/>
    </location>
    <ligand>
        <name>NADP(+)</name>
        <dbReference type="ChEBI" id="CHEBI:58349"/>
    </ligand>
</feature>
<feature type="binding site" evidence="2">
    <location>
        <position position="165"/>
    </location>
    <ligand>
        <name>NADP(+)</name>
        <dbReference type="ChEBI" id="CHEBI:58349"/>
    </ligand>
</feature>
<feature type="binding site" evidence="1">
    <location>
        <position position="196"/>
    </location>
    <ligand>
        <name>NADP(+)</name>
        <dbReference type="ChEBI" id="CHEBI:58349"/>
    </ligand>
</feature>
<sequence>MSTTYIPYRLDGKVALVTGSGRGIGAAIATQLGRLGAKVVVNYANASEAAEKVVSEIKSFGTDAVAFKADVRQVAQTAKLMDDAVAHFGSLDIVCSNSGVVSFGHIGEVTEEEFDRVFSLNTRGQFFVAREAYRHLNNGGRIILMSSNTAKDFSVPKHSLYSGSKGAIDSFVRVFSKDCGDKKITVNAVAPGGTVTDMFHDVSQHYIPGGEKYTAEERQEMAAHASPLTRNGFPVDIARVVGFLASNEAEWVNGKILTVDGGAA</sequence>
<comment type="function">
    <text evidence="5 8">Short chain dehydrogenase/reductase; part of the gene cluster that mediates the biosynthesis of the dimeric xanthones cryptosporioptides (PubMed:30996871). The pathway begins with the synthesis of atrochrysone thioester by the polyketide synthase dmx-nrPKS (Probable). The atrochrysone carboxyl ACP thioesterase dmxR1 then breaks the thioester bond and releases the atrochrysone carboxylic acid from dmx-nrPKS (Probable). Atrochrysone carboxylic acid is decarboxylated by the decarboxylase dmxR15, and oxidized by the anthrone oxygenase dmxR16 to yield emodin (Probable). Emodin is then reduced to emodin hydroquinone by the oxidoreductase dmxR7 (Probable). A-ring reduction by the short chain dehydrogenase dmxR18, dehydration by the scytalone dehydratase-like protein dmxR17 and probable spontaneous re-oxidation, results in overall deoxygenation to chrysophanol (PubMed:30996871). Baeyer-Villiger oxidation by the Baeyer-Villiger monooxygenase (BVMO) dmxR6 then yields monodictylactone in equilibrium with monodictyphenone (PubMed:30996871). In the case of the cryptosporioptides biosynthesis, monodictylactone is reduced at C-12 to an alcohol (by the short chain dehydrogenases dmxR12 or dmxR8) and hydroxylated at C-5 by dmxR9, yielding the electron-rich aromatic which could eliminate H(2)O to form the ortho-quinonemethide, followed by tautomerisation to paraquinone and complete the formal reduction to produce the 10-methylgroup (Probable). Conjugate addition of C-4a-OH to the resulting paraquinone by the monooxygenase dmxR10 then gives cyclohexadienone, which is then reduced at C-5 by the short chain dehydrogenase dmxR3 to give the dihydroxanthone (Probable). The 6,7-epoxide in the cryptosporioptides could be introduced by the cytochrome P450 monooxygenase dmxL3 (Probable). The highly reducing PKS dmxL2 manufactures butyrate, which is further carboxylated by dmxL1 to form ethylmalonate (PubMed:30996871). It is not yet clear whether the carboxylation occurs while the butyrate is attached to the ACP of dmxL2, but this unusual fungal metabolite could then be esterified to O-5 by the O-acetyltransferase dmxR13 (PubMed:30996871). Finally, dimerization performed by dmxR5 gives the observed dimers cryptosporioptides A, B and C as the final products of the pathway (PubMed:30996871).</text>
</comment>
<comment type="catalytic activity">
    <reaction evidence="3">
        <text>3,8,9,10-tetrahydroxy-6-methyl-1,4-dihydroanthracen-1-one + NADPH + H(+) = (3R)-3,8,9,10-tetrahydroxy-6-methyl-1,2,3,4-tetrahydroanthracen-1-one + NADP(+)</text>
        <dbReference type="Rhea" id="RHEA:64292"/>
        <dbReference type="ChEBI" id="CHEBI:15378"/>
        <dbReference type="ChEBI" id="CHEBI:57783"/>
        <dbReference type="ChEBI" id="CHEBI:58349"/>
        <dbReference type="ChEBI" id="CHEBI:150020"/>
        <dbReference type="ChEBI" id="CHEBI:150021"/>
    </reaction>
    <physiologicalReaction direction="left-to-right" evidence="3">
        <dbReference type="Rhea" id="RHEA:64293"/>
    </physiologicalReaction>
</comment>
<comment type="pathway">
    <text evidence="8">Secondary metabolite biosynthesis.</text>
</comment>
<comment type="similarity">
    <text evidence="7">Belongs to the short-chain dehydrogenases/reductases (SDR) family.</text>
</comment>
<evidence type="ECO:0000250" key="1">
    <source>
        <dbReference type="UniProtKB" id="L0E2Z4"/>
    </source>
</evidence>
<evidence type="ECO:0000250" key="2">
    <source>
        <dbReference type="UniProtKB" id="O93868"/>
    </source>
</evidence>
<evidence type="ECO:0000250" key="3">
    <source>
        <dbReference type="UniProtKB" id="Q5BH34"/>
    </source>
</evidence>
<evidence type="ECO:0000255" key="4">
    <source>
        <dbReference type="PROSITE-ProRule" id="PRU10001"/>
    </source>
</evidence>
<evidence type="ECO:0000269" key="5">
    <source>
    </source>
</evidence>
<evidence type="ECO:0000303" key="6">
    <source>
    </source>
</evidence>
<evidence type="ECO:0000305" key="7"/>
<evidence type="ECO:0000305" key="8">
    <source>
    </source>
</evidence>
<accession>A0A4P8DJW8</accession>
<reference key="1">
    <citation type="journal article" date="2019" name="Chem. Sci.">
        <title>Structure revision of cryptosporioptides and determination of the genetic basis for dimeric xanthone biosynthesis in fungi.</title>
        <authorList>
            <person name="Greco C."/>
            <person name="de Mattos-Shipley K."/>
            <person name="Bailey A.M."/>
            <person name="Mulholland N.P."/>
            <person name="Vincent J.L."/>
            <person name="Willis C.L."/>
            <person name="Cox R.J."/>
            <person name="Simpson T.J."/>
        </authorList>
    </citation>
    <scope>NUCLEOTIDE SEQUENCE [GENOMIC DNA]</scope>
    <scope>FUNCTION</scope>
    <scope>PATHWAY</scope>
    <source>
        <strain>8999</strain>
    </source>
</reference>
<proteinExistence type="inferred from homology"/>
<organism>
    <name type="scientific">Cryptosporiopsis sp. (strain 8999)</name>
    <dbReference type="NCBI Taxonomy" id="2572248"/>
    <lineage>
        <taxon>Eukaryota</taxon>
        <taxon>Fungi</taxon>
        <taxon>Dikarya</taxon>
        <taxon>Ascomycota</taxon>
        <taxon>Pezizomycotina</taxon>
        <taxon>Leotiomycetes</taxon>
        <taxon>Helotiales</taxon>
        <taxon>Dermateaceae</taxon>
        <taxon>Cryptosporiopsis</taxon>
    </lineage>
</organism>
<name>DMR18_CRYX8</name>
<dbReference type="EC" id="1.3.1.-" evidence="3"/>
<dbReference type="EMBL" id="MK182094">
    <property type="protein sequence ID" value="QCL09109.1"/>
    <property type="molecule type" value="Genomic_DNA"/>
</dbReference>
<dbReference type="SMR" id="A0A4P8DJW8"/>
<dbReference type="GO" id="GO:0016614">
    <property type="term" value="F:oxidoreductase activity, acting on CH-OH group of donors"/>
    <property type="evidence" value="ECO:0007669"/>
    <property type="project" value="UniProtKB-ARBA"/>
</dbReference>
<dbReference type="FunFam" id="3.40.50.720:FF:000084">
    <property type="entry name" value="Short-chain dehydrogenase reductase"/>
    <property type="match status" value="1"/>
</dbReference>
<dbReference type="Gene3D" id="3.40.50.720">
    <property type="entry name" value="NAD(P)-binding Rossmann-like Domain"/>
    <property type="match status" value="1"/>
</dbReference>
<dbReference type="InterPro" id="IPR036291">
    <property type="entry name" value="NAD(P)-bd_dom_sf"/>
</dbReference>
<dbReference type="InterPro" id="IPR020904">
    <property type="entry name" value="Sc_DH/Rdtase_CS"/>
</dbReference>
<dbReference type="InterPro" id="IPR002347">
    <property type="entry name" value="SDR_fam"/>
</dbReference>
<dbReference type="PANTHER" id="PTHR48107">
    <property type="entry name" value="NADPH-DEPENDENT ALDEHYDE REDUCTASE-LIKE PROTEIN, CHLOROPLASTIC-RELATED"/>
    <property type="match status" value="1"/>
</dbReference>
<dbReference type="PANTHER" id="PTHR48107:SF7">
    <property type="entry name" value="RE15974P"/>
    <property type="match status" value="1"/>
</dbReference>
<dbReference type="Pfam" id="PF13561">
    <property type="entry name" value="adh_short_C2"/>
    <property type="match status" value="1"/>
</dbReference>
<dbReference type="PRINTS" id="PR00081">
    <property type="entry name" value="GDHRDH"/>
</dbReference>
<dbReference type="PRINTS" id="PR00080">
    <property type="entry name" value="SDRFAMILY"/>
</dbReference>
<dbReference type="SMART" id="SM00822">
    <property type="entry name" value="PKS_KR"/>
    <property type="match status" value="1"/>
</dbReference>
<dbReference type="SUPFAM" id="SSF51735">
    <property type="entry name" value="NAD(P)-binding Rossmann-fold domains"/>
    <property type="match status" value="1"/>
</dbReference>
<dbReference type="PROSITE" id="PS00061">
    <property type="entry name" value="ADH_SHORT"/>
    <property type="match status" value="1"/>
</dbReference>